<protein>
    <recommendedName>
        <fullName evidence="5">Very-long-chain aldehyde decarbonylase GL1-6</fullName>
        <ecNumber evidence="1">4.1.99.5</ecNumber>
    </recommendedName>
    <alternativeName>
        <fullName evidence="4">Protein GLOSSY 1-6</fullName>
    </alternativeName>
</protein>
<comment type="function">
    <text evidence="1">Aldehyde decarbonylase involved in the conversion of aldehydes to alkanes. Core component of a very-long-chain alkane synthesis complex.</text>
</comment>
<comment type="catalytic activity">
    <reaction evidence="1">
        <text>a long-chain fatty aldehyde + 2 NADPH + O2 + H(+) = a long-chain alkane + formate + 2 NADP(+) + H2O</text>
        <dbReference type="Rhea" id="RHEA:21440"/>
        <dbReference type="ChEBI" id="CHEBI:15377"/>
        <dbReference type="ChEBI" id="CHEBI:15378"/>
        <dbReference type="ChEBI" id="CHEBI:15379"/>
        <dbReference type="ChEBI" id="CHEBI:15740"/>
        <dbReference type="ChEBI" id="CHEBI:17176"/>
        <dbReference type="ChEBI" id="CHEBI:57783"/>
        <dbReference type="ChEBI" id="CHEBI:58349"/>
        <dbReference type="ChEBI" id="CHEBI:83563"/>
        <dbReference type="EC" id="4.1.99.5"/>
    </reaction>
</comment>
<comment type="subunit">
    <text evidence="1">Homodimer.</text>
</comment>
<comment type="subcellular location">
    <subcellularLocation>
        <location evidence="1">Endoplasmic reticulum membrane</location>
        <topology evidence="1">Multi-pass membrane protein</topology>
    </subcellularLocation>
</comment>
<comment type="tissue specificity">
    <text evidence="3">Expressed in germinating seeds and shoots.</text>
</comment>
<comment type="induction">
    <text evidence="3">Induced by drought, cold and salt stress.</text>
</comment>
<comment type="similarity">
    <text evidence="5">Belongs to the sterol desaturase family.</text>
</comment>
<gene>
    <name evidence="4" type="primary">GL1-6</name>
    <name evidence="5" type="ordered locus">LOC_Os02g56920</name>
    <name evidence="8" type="ordered locus">Os02g0814200</name>
    <name evidence="6" type="ORF">OJ1293_E04.17</name>
    <name evidence="10" type="ORF">OsJ_08848</name>
    <name evidence="7" type="ORF">OSJNBa0053L11.39</name>
    <name evidence="9" type="ORF">OSNPB_020814200</name>
</gene>
<organism>
    <name type="scientific">Oryza sativa subsp. japonica</name>
    <name type="common">Rice</name>
    <dbReference type="NCBI Taxonomy" id="39947"/>
    <lineage>
        <taxon>Eukaryota</taxon>
        <taxon>Viridiplantae</taxon>
        <taxon>Streptophyta</taxon>
        <taxon>Embryophyta</taxon>
        <taxon>Tracheophyta</taxon>
        <taxon>Spermatophyta</taxon>
        <taxon>Magnoliopsida</taxon>
        <taxon>Liliopsida</taxon>
        <taxon>Poales</taxon>
        <taxon>Poaceae</taxon>
        <taxon>BOP clade</taxon>
        <taxon>Oryzoideae</taxon>
        <taxon>Oryzeae</taxon>
        <taxon>Oryzinae</taxon>
        <taxon>Oryza</taxon>
        <taxon>Oryza sativa</taxon>
    </lineage>
</organism>
<keyword id="KW-0256">Endoplasmic reticulum</keyword>
<keyword id="KW-0456">Lyase</keyword>
<keyword id="KW-0472">Membrane</keyword>
<keyword id="KW-0521">NADP</keyword>
<keyword id="KW-1185">Reference proteome</keyword>
<keyword id="KW-0812">Transmembrane</keyword>
<keyword id="KW-1133">Transmembrane helix</keyword>
<feature type="chain" id="PRO_0000445877" description="Very-long-chain aldehyde decarbonylase GL1-6">
    <location>
        <begin position="1"/>
        <end position="635"/>
    </location>
</feature>
<feature type="transmembrane region" description="Helical" evidence="2">
    <location>
        <begin position="46"/>
        <end position="66"/>
    </location>
</feature>
<feature type="transmembrane region" description="Helical" evidence="2">
    <location>
        <begin position="100"/>
        <end position="120"/>
    </location>
</feature>
<feature type="transmembrane region" description="Helical" evidence="2">
    <location>
        <begin position="127"/>
        <end position="147"/>
    </location>
</feature>
<feature type="transmembrane region" description="Helical" evidence="2">
    <location>
        <begin position="183"/>
        <end position="203"/>
    </location>
</feature>
<feature type="domain" description="Fatty acid hydroxylase" evidence="2">
    <location>
        <begin position="139"/>
        <end position="273"/>
    </location>
</feature>
<reference key="1">
    <citation type="journal article" date="2005" name="Nature">
        <title>The map-based sequence of the rice genome.</title>
        <authorList>
            <consortium name="International rice genome sequencing project (IRGSP)"/>
        </authorList>
    </citation>
    <scope>NUCLEOTIDE SEQUENCE [LARGE SCALE GENOMIC DNA]</scope>
    <source>
        <strain>cv. Nipponbare</strain>
    </source>
</reference>
<reference key="2">
    <citation type="journal article" date="2008" name="Nucleic Acids Res.">
        <title>The rice annotation project database (RAP-DB): 2008 update.</title>
        <authorList>
            <consortium name="The rice annotation project (RAP)"/>
        </authorList>
    </citation>
    <scope>GENOME REANNOTATION</scope>
    <source>
        <strain>cv. Nipponbare</strain>
    </source>
</reference>
<reference key="3">
    <citation type="journal article" date="2013" name="Rice">
        <title>Improvement of the Oryza sativa Nipponbare reference genome using next generation sequence and optical map data.</title>
        <authorList>
            <person name="Kawahara Y."/>
            <person name="de la Bastide M."/>
            <person name="Hamilton J.P."/>
            <person name="Kanamori H."/>
            <person name="McCombie W.R."/>
            <person name="Ouyang S."/>
            <person name="Schwartz D.C."/>
            <person name="Tanaka T."/>
            <person name="Wu J."/>
            <person name="Zhou S."/>
            <person name="Childs K.L."/>
            <person name="Davidson R.M."/>
            <person name="Lin H."/>
            <person name="Quesada-Ocampo L."/>
            <person name="Vaillancourt B."/>
            <person name="Sakai H."/>
            <person name="Lee S.S."/>
            <person name="Kim J."/>
            <person name="Numa H."/>
            <person name="Itoh T."/>
            <person name="Buell C.R."/>
            <person name="Matsumoto T."/>
        </authorList>
    </citation>
    <scope>GENOME REANNOTATION</scope>
    <source>
        <strain>cv. Nipponbare</strain>
    </source>
</reference>
<reference key="4">
    <citation type="journal article" date="2005" name="PLoS Biol.">
        <title>The genomes of Oryza sativa: a history of duplications.</title>
        <authorList>
            <person name="Yu J."/>
            <person name="Wang J."/>
            <person name="Lin W."/>
            <person name="Li S."/>
            <person name="Li H."/>
            <person name="Zhou J."/>
            <person name="Ni P."/>
            <person name="Dong W."/>
            <person name="Hu S."/>
            <person name="Zeng C."/>
            <person name="Zhang J."/>
            <person name="Zhang Y."/>
            <person name="Li R."/>
            <person name="Xu Z."/>
            <person name="Li S."/>
            <person name="Li X."/>
            <person name="Zheng H."/>
            <person name="Cong L."/>
            <person name="Lin L."/>
            <person name="Yin J."/>
            <person name="Geng J."/>
            <person name="Li G."/>
            <person name="Shi J."/>
            <person name="Liu J."/>
            <person name="Lv H."/>
            <person name="Li J."/>
            <person name="Wang J."/>
            <person name="Deng Y."/>
            <person name="Ran L."/>
            <person name="Shi X."/>
            <person name="Wang X."/>
            <person name="Wu Q."/>
            <person name="Li C."/>
            <person name="Ren X."/>
            <person name="Wang J."/>
            <person name="Wang X."/>
            <person name="Li D."/>
            <person name="Liu D."/>
            <person name="Zhang X."/>
            <person name="Ji Z."/>
            <person name="Zhao W."/>
            <person name="Sun Y."/>
            <person name="Zhang Z."/>
            <person name="Bao J."/>
            <person name="Han Y."/>
            <person name="Dong L."/>
            <person name="Ji J."/>
            <person name="Chen P."/>
            <person name="Wu S."/>
            <person name="Liu J."/>
            <person name="Xiao Y."/>
            <person name="Bu D."/>
            <person name="Tan J."/>
            <person name="Yang L."/>
            <person name="Ye C."/>
            <person name="Zhang J."/>
            <person name="Xu J."/>
            <person name="Zhou Y."/>
            <person name="Yu Y."/>
            <person name="Zhang B."/>
            <person name="Zhuang S."/>
            <person name="Wei H."/>
            <person name="Liu B."/>
            <person name="Lei M."/>
            <person name="Yu H."/>
            <person name="Li Y."/>
            <person name="Xu H."/>
            <person name="Wei S."/>
            <person name="He X."/>
            <person name="Fang L."/>
            <person name="Zhang Z."/>
            <person name="Zhang Y."/>
            <person name="Huang X."/>
            <person name="Su Z."/>
            <person name="Tong W."/>
            <person name="Li J."/>
            <person name="Tong Z."/>
            <person name="Li S."/>
            <person name="Ye J."/>
            <person name="Wang L."/>
            <person name="Fang L."/>
            <person name="Lei T."/>
            <person name="Chen C.-S."/>
            <person name="Chen H.-C."/>
            <person name="Xu Z."/>
            <person name="Li H."/>
            <person name="Huang H."/>
            <person name="Zhang F."/>
            <person name="Xu H."/>
            <person name="Li N."/>
            <person name="Zhao C."/>
            <person name="Li S."/>
            <person name="Dong L."/>
            <person name="Huang Y."/>
            <person name="Li L."/>
            <person name="Xi Y."/>
            <person name="Qi Q."/>
            <person name="Li W."/>
            <person name="Zhang B."/>
            <person name="Hu W."/>
            <person name="Zhang Y."/>
            <person name="Tian X."/>
            <person name="Jiao Y."/>
            <person name="Liang X."/>
            <person name="Jin J."/>
            <person name="Gao L."/>
            <person name="Zheng W."/>
            <person name="Hao B."/>
            <person name="Liu S.-M."/>
            <person name="Wang W."/>
            <person name="Yuan L."/>
            <person name="Cao M."/>
            <person name="McDermott J."/>
            <person name="Samudrala R."/>
            <person name="Wang J."/>
            <person name="Wong G.K.-S."/>
            <person name="Yang H."/>
        </authorList>
    </citation>
    <scope>NUCLEOTIDE SEQUENCE [LARGE SCALE GENOMIC DNA]</scope>
    <source>
        <strain>cv. Nipponbare</strain>
    </source>
</reference>
<reference key="5">
    <citation type="journal article" date="2003" name="Science">
        <title>Collection, mapping, and annotation of over 28,000 cDNA clones from japonica rice.</title>
        <authorList>
            <consortium name="The rice full-length cDNA consortium"/>
        </authorList>
    </citation>
    <scope>NUCLEOTIDE SEQUENCE [LARGE SCALE MRNA]</scope>
    <source>
        <strain>cv. Nipponbare</strain>
    </source>
</reference>
<reference key="6">
    <citation type="journal article" date="2009" name="Plant Mol. Biol.">
        <title>Characterization of Glossy1-homologous genes in rice involved in leaf wax accumulation and drought resistance.</title>
        <authorList>
            <person name="Islam M.A."/>
            <person name="Du H."/>
            <person name="Ning J."/>
            <person name="Ye H."/>
            <person name="Xiong L."/>
        </authorList>
    </citation>
    <scope>TISSUE SPECIFICITY</scope>
    <scope>INDUCTION BY DROUGHT; COLD AND SALT STRESS</scope>
    <scope>GENE FAMILY</scope>
    <scope>NOMENCLATURE</scope>
</reference>
<proteinExistence type="evidence at transcript level"/>
<accession>Q6K3D8</accession>
<evidence type="ECO:0000250" key="1">
    <source>
        <dbReference type="UniProtKB" id="F4HVY0"/>
    </source>
</evidence>
<evidence type="ECO:0000255" key="2"/>
<evidence type="ECO:0000269" key="3">
    <source>
    </source>
</evidence>
<evidence type="ECO:0000303" key="4">
    <source>
    </source>
</evidence>
<evidence type="ECO:0000305" key="5"/>
<evidence type="ECO:0000312" key="6">
    <source>
        <dbReference type="EMBL" id="BAD21663.1"/>
    </source>
</evidence>
<evidence type="ECO:0000312" key="7">
    <source>
        <dbReference type="EMBL" id="BAD22402.1"/>
    </source>
</evidence>
<evidence type="ECO:0000312" key="8">
    <source>
        <dbReference type="EMBL" id="BAF10404.1"/>
    </source>
</evidence>
<evidence type="ECO:0000312" key="9">
    <source>
        <dbReference type="EMBL" id="BAS81546.1"/>
    </source>
</evidence>
<evidence type="ECO:0000312" key="10">
    <source>
        <dbReference type="EMBL" id="EAZ25056.1"/>
    </source>
</evidence>
<sequence>MASKPGPLTQWPWHNLGNYKYALVAPSAAYSTYRFVTASSAAERDLLNFMVFPMLLLRLLYGQLWITVSRHQTARSKHKIVNKSLDFEQIDRERNWDDQIILTALVFYLVSATMPQAQVAPWWSTKGMVVTAVLHAGPVEFLYYWLHRALHHHWLYARYHSHHHASIVTEPITSVIHPFAEEVVYFVLLAIPILSTVATGTVSVVTANGYLVYIDFMNYLGHCNFELVPKCLFHVFPPLKYLLYTPSFHSLHHTQFRTNYSLFMPVYDYIYGTTDKSSDELYERTLQGRDEAAWRPDVVHLTHLTTPESVFHNRLGFAAVASNPLGAAASGHLLRAASAVASPLLSLFASTFRSEANRLDKLNIETWVIPRFTSHYTSKSDGYKVSRLIEKAVSDAEASGARVLTLGLLNQGYDLNRNGELYVVRKPSLKTKIVDGTSLAVAAVLNMIPQGTKDVLLLGNANKISLVLTLSLCKREIQVRMVNKELYECLKQQLQPEMQEHLVLSCSYSSKVWLVGDGVTDEEQMKAQKGSHFVPYSQFPPNKARNDCVYHCTPALLVPESFENLHVCENWLPRRVMSAWRAAGIVHALEKWDGHECGGRVTGVQKAWSAALARGFRPYDDHHHPGITHDGRGGL</sequence>
<dbReference type="EC" id="4.1.99.5" evidence="1"/>
<dbReference type="EMBL" id="AP004120">
    <property type="protein sequence ID" value="BAD21663.1"/>
    <property type="molecule type" value="Genomic_DNA"/>
</dbReference>
<dbReference type="EMBL" id="AP005691">
    <property type="protein sequence ID" value="BAD22402.1"/>
    <property type="molecule type" value="Genomic_DNA"/>
</dbReference>
<dbReference type="EMBL" id="AP008208">
    <property type="protein sequence ID" value="BAF10404.1"/>
    <property type="molecule type" value="Genomic_DNA"/>
</dbReference>
<dbReference type="EMBL" id="AP014958">
    <property type="protein sequence ID" value="BAS81546.1"/>
    <property type="molecule type" value="Genomic_DNA"/>
</dbReference>
<dbReference type="EMBL" id="CM000139">
    <property type="protein sequence ID" value="EAZ25056.1"/>
    <property type="molecule type" value="Genomic_DNA"/>
</dbReference>
<dbReference type="EMBL" id="AK068166">
    <property type="protein sequence ID" value="BAG90785.1"/>
    <property type="molecule type" value="mRNA"/>
</dbReference>
<dbReference type="STRING" id="39947.Q6K3D8"/>
<dbReference type="PaxDb" id="39947-Q6K3D8"/>
<dbReference type="EnsemblPlants" id="Os02t0814200-01">
    <property type="protein sequence ID" value="Os02t0814200-01"/>
    <property type="gene ID" value="Os02g0814200"/>
</dbReference>
<dbReference type="GeneID" id="4331117"/>
<dbReference type="Gramene" id="Os02t0814200-01">
    <property type="protein sequence ID" value="Os02t0814200-01"/>
    <property type="gene ID" value="Os02g0814200"/>
</dbReference>
<dbReference type="KEGG" id="dosa:Os02g0814200"/>
<dbReference type="KEGG" id="osa:4331117"/>
<dbReference type="eggNOG" id="ENOG502QR3T">
    <property type="taxonomic scope" value="Eukaryota"/>
</dbReference>
<dbReference type="HOGENOM" id="CLU_017842_1_0_1"/>
<dbReference type="InParanoid" id="Q6K3D8"/>
<dbReference type="OMA" id="VCENWLP"/>
<dbReference type="OrthoDB" id="408954at2759"/>
<dbReference type="Proteomes" id="UP000000763">
    <property type="component" value="Chromosome 2"/>
</dbReference>
<dbReference type="Proteomes" id="UP000007752">
    <property type="component" value="Chromosome 2"/>
</dbReference>
<dbReference type="Proteomes" id="UP000059680">
    <property type="component" value="Chromosome 2"/>
</dbReference>
<dbReference type="ExpressionAtlas" id="Q6K3D8">
    <property type="expression patterns" value="baseline and differential"/>
</dbReference>
<dbReference type="GO" id="GO:0005789">
    <property type="term" value="C:endoplasmic reticulum membrane"/>
    <property type="evidence" value="ECO:0007669"/>
    <property type="project" value="UniProtKB-SubCell"/>
</dbReference>
<dbReference type="GO" id="GO:0071771">
    <property type="term" value="F:aldehyde oxygenase (deformylating) activity"/>
    <property type="evidence" value="ECO:0007669"/>
    <property type="project" value="UniProtKB-EC"/>
</dbReference>
<dbReference type="GO" id="GO:0005506">
    <property type="term" value="F:iron ion binding"/>
    <property type="evidence" value="ECO:0007669"/>
    <property type="project" value="InterPro"/>
</dbReference>
<dbReference type="GO" id="GO:0016491">
    <property type="term" value="F:oxidoreductase activity"/>
    <property type="evidence" value="ECO:0007669"/>
    <property type="project" value="InterPro"/>
</dbReference>
<dbReference type="GO" id="GO:0008610">
    <property type="term" value="P:lipid biosynthetic process"/>
    <property type="evidence" value="ECO:0007669"/>
    <property type="project" value="InterPro"/>
</dbReference>
<dbReference type="GO" id="GO:0009409">
    <property type="term" value="P:response to cold"/>
    <property type="evidence" value="ECO:0000270"/>
    <property type="project" value="UniProtKB"/>
</dbReference>
<dbReference type="GO" id="GO:0009651">
    <property type="term" value="P:response to salt stress"/>
    <property type="evidence" value="ECO:0000270"/>
    <property type="project" value="UniProtKB"/>
</dbReference>
<dbReference type="GO" id="GO:0009414">
    <property type="term" value="P:response to water deprivation"/>
    <property type="evidence" value="ECO:0000270"/>
    <property type="project" value="UniProtKB"/>
</dbReference>
<dbReference type="InterPro" id="IPR021940">
    <property type="entry name" value="CER1-like_C"/>
</dbReference>
<dbReference type="InterPro" id="IPR006694">
    <property type="entry name" value="Fatty_acid_hydroxylase"/>
</dbReference>
<dbReference type="InterPro" id="IPR050307">
    <property type="entry name" value="Sterol_Desaturase_Related"/>
</dbReference>
<dbReference type="PANTHER" id="PTHR11863">
    <property type="entry name" value="STEROL DESATURASE"/>
    <property type="match status" value="1"/>
</dbReference>
<dbReference type="Pfam" id="PF12076">
    <property type="entry name" value="CER1-like_C"/>
    <property type="match status" value="1"/>
</dbReference>
<dbReference type="Pfam" id="PF04116">
    <property type="entry name" value="FA_hydroxylase"/>
    <property type="match status" value="1"/>
</dbReference>
<name>GLO16_ORYSJ</name>